<dbReference type="EC" id="2.7.1.24" evidence="1"/>
<dbReference type="EMBL" id="CP000151">
    <property type="protein sequence ID" value="ABB07261.1"/>
    <property type="molecule type" value="Genomic_DNA"/>
</dbReference>
<dbReference type="RefSeq" id="WP_011350853.1">
    <property type="nucleotide sequence ID" value="NC_007510.1"/>
</dbReference>
<dbReference type="SMR" id="Q39JV5"/>
<dbReference type="GeneID" id="45093573"/>
<dbReference type="KEGG" id="bur:Bcep18194_A3660"/>
<dbReference type="PATRIC" id="fig|482957.22.peg.514"/>
<dbReference type="HOGENOM" id="CLU_057180_1_2_4"/>
<dbReference type="UniPathway" id="UPA00241">
    <property type="reaction ID" value="UER00356"/>
</dbReference>
<dbReference type="Proteomes" id="UP000002705">
    <property type="component" value="Chromosome 1"/>
</dbReference>
<dbReference type="GO" id="GO:0005737">
    <property type="term" value="C:cytoplasm"/>
    <property type="evidence" value="ECO:0007669"/>
    <property type="project" value="UniProtKB-SubCell"/>
</dbReference>
<dbReference type="GO" id="GO:0005524">
    <property type="term" value="F:ATP binding"/>
    <property type="evidence" value="ECO:0007669"/>
    <property type="project" value="UniProtKB-UniRule"/>
</dbReference>
<dbReference type="GO" id="GO:0004140">
    <property type="term" value="F:dephospho-CoA kinase activity"/>
    <property type="evidence" value="ECO:0007669"/>
    <property type="project" value="UniProtKB-UniRule"/>
</dbReference>
<dbReference type="GO" id="GO:0015937">
    <property type="term" value="P:coenzyme A biosynthetic process"/>
    <property type="evidence" value="ECO:0007669"/>
    <property type="project" value="UniProtKB-UniRule"/>
</dbReference>
<dbReference type="CDD" id="cd02022">
    <property type="entry name" value="DPCK"/>
    <property type="match status" value="1"/>
</dbReference>
<dbReference type="Gene3D" id="3.40.50.300">
    <property type="entry name" value="P-loop containing nucleotide triphosphate hydrolases"/>
    <property type="match status" value="1"/>
</dbReference>
<dbReference type="HAMAP" id="MF_00376">
    <property type="entry name" value="Dephospho_CoA_kinase"/>
    <property type="match status" value="1"/>
</dbReference>
<dbReference type="InterPro" id="IPR001977">
    <property type="entry name" value="Depp_CoAkinase"/>
</dbReference>
<dbReference type="InterPro" id="IPR027417">
    <property type="entry name" value="P-loop_NTPase"/>
</dbReference>
<dbReference type="NCBIfam" id="TIGR00152">
    <property type="entry name" value="dephospho-CoA kinase"/>
    <property type="match status" value="1"/>
</dbReference>
<dbReference type="PANTHER" id="PTHR10695:SF46">
    <property type="entry name" value="BIFUNCTIONAL COENZYME A SYNTHASE-RELATED"/>
    <property type="match status" value="1"/>
</dbReference>
<dbReference type="PANTHER" id="PTHR10695">
    <property type="entry name" value="DEPHOSPHO-COA KINASE-RELATED"/>
    <property type="match status" value="1"/>
</dbReference>
<dbReference type="Pfam" id="PF01121">
    <property type="entry name" value="CoaE"/>
    <property type="match status" value="1"/>
</dbReference>
<dbReference type="SUPFAM" id="SSF52540">
    <property type="entry name" value="P-loop containing nucleoside triphosphate hydrolases"/>
    <property type="match status" value="1"/>
</dbReference>
<dbReference type="PROSITE" id="PS51219">
    <property type="entry name" value="DPCK"/>
    <property type="match status" value="1"/>
</dbReference>
<organism>
    <name type="scientific">Burkholderia lata (strain ATCC 17760 / DSM 23089 / LMG 22485 / NCIMB 9086 / R18194 / 383)</name>
    <dbReference type="NCBI Taxonomy" id="482957"/>
    <lineage>
        <taxon>Bacteria</taxon>
        <taxon>Pseudomonadati</taxon>
        <taxon>Pseudomonadota</taxon>
        <taxon>Betaproteobacteria</taxon>
        <taxon>Burkholderiales</taxon>
        <taxon>Burkholderiaceae</taxon>
        <taxon>Burkholderia</taxon>
        <taxon>Burkholderia cepacia complex</taxon>
    </lineage>
</organism>
<feature type="chain" id="PRO_0000243269" description="Dephospho-CoA kinase">
    <location>
        <begin position="1"/>
        <end position="202"/>
    </location>
</feature>
<feature type="domain" description="DPCK" evidence="1">
    <location>
        <begin position="3"/>
        <end position="201"/>
    </location>
</feature>
<feature type="binding site" evidence="1">
    <location>
        <begin position="11"/>
        <end position="16"/>
    </location>
    <ligand>
        <name>ATP</name>
        <dbReference type="ChEBI" id="CHEBI:30616"/>
    </ligand>
</feature>
<sequence length="202" mass="21597">MFAIGLTGGIGSGKTTVADLFGARGASLVDTDLIAHRITAPGGLAMPAIEQAFGRGFVAADGSLDRAKMRTLIFSDDAALRRLEAITHPLIRAETDREAREAPGPYVMFVVPLLVESGNWKARSDRVLVVDCPVETQIARVMRRNGFTREQVEAIIAKQATREARLAAADDVIVNDATTPDALAAQVDALHQRYLGFAAAAR</sequence>
<evidence type="ECO:0000255" key="1">
    <source>
        <dbReference type="HAMAP-Rule" id="MF_00376"/>
    </source>
</evidence>
<comment type="function">
    <text evidence="1">Catalyzes the phosphorylation of the 3'-hydroxyl group of dephosphocoenzyme A to form coenzyme A.</text>
</comment>
<comment type="catalytic activity">
    <reaction evidence="1">
        <text>3'-dephospho-CoA + ATP = ADP + CoA + H(+)</text>
        <dbReference type="Rhea" id="RHEA:18245"/>
        <dbReference type="ChEBI" id="CHEBI:15378"/>
        <dbReference type="ChEBI" id="CHEBI:30616"/>
        <dbReference type="ChEBI" id="CHEBI:57287"/>
        <dbReference type="ChEBI" id="CHEBI:57328"/>
        <dbReference type="ChEBI" id="CHEBI:456216"/>
        <dbReference type="EC" id="2.7.1.24"/>
    </reaction>
</comment>
<comment type="pathway">
    <text evidence="1">Cofactor biosynthesis; coenzyme A biosynthesis; CoA from (R)-pantothenate: step 5/5.</text>
</comment>
<comment type="subcellular location">
    <subcellularLocation>
        <location evidence="1">Cytoplasm</location>
    </subcellularLocation>
</comment>
<comment type="similarity">
    <text evidence="1">Belongs to the CoaE family.</text>
</comment>
<proteinExistence type="inferred from homology"/>
<accession>Q39JV5</accession>
<name>COAE_BURL3</name>
<protein>
    <recommendedName>
        <fullName evidence="1">Dephospho-CoA kinase</fullName>
        <ecNumber evidence="1">2.7.1.24</ecNumber>
    </recommendedName>
    <alternativeName>
        <fullName evidence="1">Dephosphocoenzyme A kinase</fullName>
    </alternativeName>
</protein>
<keyword id="KW-0067">ATP-binding</keyword>
<keyword id="KW-0173">Coenzyme A biosynthesis</keyword>
<keyword id="KW-0963">Cytoplasm</keyword>
<keyword id="KW-0418">Kinase</keyword>
<keyword id="KW-0547">Nucleotide-binding</keyword>
<keyword id="KW-0808">Transferase</keyword>
<gene>
    <name evidence="1" type="primary">coaE</name>
    <name type="ordered locus">Bcep18194_A3660</name>
</gene>
<reference key="1">
    <citation type="submission" date="2005-10" db="EMBL/GenBank/DDBJ databases">
        <title>Complete sequence of chromosome 1 of Burkholderia sp. 383.</title>
        <authorList>
            <consortium name="US DOE Joint Genome Institute"/>
            <person name="Copeland A."/>
            <person name="Lucas S."/>
            <person name="Lapidus A."/>
            <person name="Barry K."/>
            <person name="Detter J.C."/>
            <person name="Glavina T."/>
            <person name="Hammon N."/>
            <person name="Israni S."/>
            <person name="Pitluck S."/>
            <person name="Chain P."/>
            <person name="Malfatti S."/>
            <person name="Shin M."/>
            <person name="Vergez L."/>
            <person name="Schmutz J."/>
            <person name="Larimer F."/>
            <person name="Land M."/>
            <person name="Kyrpides N."/>
            <person name="Lykidis A."/>
            <person name="Richardson P."/>
        </authorList>
    </citation>
    <scope>NUCLEOTIDE SEQUENCE [LARGE SCALE GENOMIC DNA]</scope>
    <source>
        <strain>ATCC 17760 / DSM 23089 / LMG 22485 / NCIMB 9086 / R18194 / 383</strain>
    </source>
</reference>